<keyword id="KW-0687">Ribonucleoprotein</keyword>
<keyword id="KW-0689">Ribosomal protein</keyword>
<keyword id="KW-0694">RNA-binding</keyword>
<keyword id="KW-0699">rRNA-binding</keyword>
<reference key="1">
    <citation type="journal article" date="2009" name="Environ. Microbiol.">
        <title>Contribution of mobile genetic elements to Desulfovibrio vulgaris genome plasticity.</title>
        <authorList>
            <person name="Walker C.B."/>
            <person name="Stolyar S."/>
            <person name="Chivian D."/>
            <person name="Pinel N."/>
            <person name="Gabster J.A."/>
            <person name="Dehal P.S."/>
            <person name="He Z."/>
            <person name="Yang Z.K."/>
            <person name="Yen H.C."/>
            <person name="Zhou J."/>
            <person name="Wall J.D."/>
            <person name="Hazen T.C."/>
            <person name="Arkin A.P."/>
            <person name="Stahl D.A."/>
        </authorList>
    </citation>
    <scope>NUCLEOTIDE SEQUENCE [LARGE SCALE GENOMIC DNA]</scope>
    <source>
        <strain>DP4</strain>
    </source>
</reference>
<proteinExistence type="inferred from homology"/>
<accession>A1VEA1</accession>
<sequence length="179" mass="19133">MSRIGKQPIPIPSGVEVKIGNDVVEVKGPKGALTTPVCSVLSYEVTDGKVVITRLDETRQTRAQHGLRRTLLANCIEGVSKGFSKTLEVVGVGYKVAVKGDVVDLSVGYSHPVLIDLPAGISAKAEGNKLTISGVDKELVGEVAAQMRRVRKPEPYKGKGIKYDNEQIRRKAGKSGGKK</sequence>
<gene>
    <name evidence="1" type="primary">rplF</name>
    <name type="ordered locus">Dvul_1750</name>
</gene>
<dbReference type="EMBL" id="CP000527">
    <property type="protein sequence ID" value="ABM28767.1"/>
    <property type="molecule type" value="Genomic_DNA"/>
</dbReference>
<dbReference type="RefSeq" id="WP_010938613.1">
    <property type="nucleotide sequence ID" value="NC_008751.1"/>
</dbReference>
<dbReference type="SMR" id="A1VEA1"/>
<dbReference type="KEGG" id="dvl:Dvul_1750"/>
<dbReference type="HOGENOM" id="CLU_065464_1_2_7"/>
<dbReference type="Proteomes" id="UP000009173">
    <property type="component" value="Chromosome"/>
</dbReference>
<dbReference type="GO" id="GO:0022625">
    <property type="term" value="C:cytosolic large ribosomal subunit"/>
    <property type="evidence" value="ECO:0007669"/>
    <property type="project" value="TreeGrafter"/>
</dbReference>
<dbReference type="GO" id="GO:0019843">
    <property type="term" value="F:rRNA binding"/>
    <property type="evidence" value="ECO:0007669"/>
    <property type="project" value="UniProtKB-UniRule"/>
</dbReference>
<dbReference type="GO" id="GO:0003735">
    <property type="term" value="F:structural constituent of ribosome"/>
    <property type="evidence" value="ECO:0007669"/>
    <property type="project" value="InterPro"/>
</dbReference>
<dbReference type="GO" id="GO:0002181">
    <property type="term" value="P:cytoplasmic translation"/>
    <property type="evidence" value="ECO:0007669"/>
    <property type="project" value="TreeGrafter"/>
</dbReference>
<dbReference type="FunFam" id="3.90.930.12:FF:000001">
    <property type="entry name" value="50S ribosomal protein L6"/>
    <property type="match status" value="1"/>
</dbReference>
<dbReference type="FunFam" id="3.90.930.12:FF:000002">
    <property type="entry name" value="50S ribosomal protein L6"/>
    <property type="match status" value="1"/>
</dbReference>
<dbReference type="Gene3D" id="3.90.930.12">
    <property type="entry name" value="Ribosomal protein L6, alpha-beta domain"/>
    <property type="match status" value="2"/>
</dbReference>
<dbReference type="HAMAP" id="MF_01365_B">
    <property type="entry name" value="Ribosomal_uL6_B"/>
    <property type="match status" value="1"/>
</dbReference>
<dbReference type="InterPro" id="IPR000702">
    <property type="entry name" value="Ribosomal_uL6-like"/>
</dbReference>
<dbReference type="InterPro" id="IPR036789">
    <property type="entry name" value="Ribosomal_uL6-like_a/b-dom_sf"/>
</dbReference>
<dbReference type="InterPro" id="IPR020040">
    <property type="entry name" value="Ribosomal_uL6_a/b-dom"/>
</dbReference>
<dbReference type="InterPro" id="IPR019906">
    <property type="entry name" value="Ribosomal_uL6_bac-type"/>
</dbReference>
<dbReference type="InterPro" id="IPR002358">
    <property type="entry name" value="Ribosomal_uL6_CS"/>
</dbReference>
<dbReference type="NCBIfam" id="TIGR03654">
    <property type="entry name" value="L6_bact"/>
    <property type="match status" value="1"/>
</dbReference>
<dbReference type="PANTHER" id="PTHR11655">
    <property type="entry name" value="60S/50S RIBOSOMAL PROTEIN L6/L9"/>
    <property type="match status" value="1"/>
</dbReference>
<dbReference type="PANTHER" id="PTHR11655:SF14">
    <property type="entry name" value="LARGE RIBOSOMAL SUBUNIT PROTEIN UL6M"/>
    <property type="match status" value="1"/>
</dbReference>
<dbReference type="Pfam" id="PF00347">
    <property type="entry name" value="Ribosomal_L6"/>
    <property type="match status" value="2"/>
</dbReference>
<dbReference type="PIRSF" id="PIRSF002162">
    <property type="entry name" value="Ribosomal_L6"/>
    <property type="match status" value="1"/>
</dbReference>
<dbReference type="PRINTS" id="PR00059">
    <property type="entry name" value="RIBOSOMALL6"/>
</dbReference>
<dbReference type="SUPFAM" id="SSF56053">
    <property type="entry name" value="Ribosomal protein L6"/>
    <property type="match status" value="2"/>
</dbReference>
<dbReference type="PROSITE" id="PS00525">
    <property type="entry name" value="RIBOSOMAL_L6_1"/>
    <property type="match status" value="1"/>
</dbReference>
<name>RL6_NITV4</name>
<protein>
    <recommendedName>
        <fullName evidence="1">Large ribosomal subunit protein uL6</fullName>
    </recommendedName>
    <alternativeName>
        <fullName evidence="3">50S ribosomal protein L6</fullName>
    </alternativeName>
</protein>
<evidence type="ECO:0000255" key="1">
    <source>
        <dbReference type="HAMAP-Rule" id="MF_01365"/>
    </source>
</evidence>
<evidence type="ECO:0000256" key="2">
    <source>
        <dbReference type="SAM" id="MobiDB-lite"/>
    </source>
</evidence>
<evidence type="ECO:0000305" key="3"/>
<organism>
    <name type="scientific">Nitratidesulfovibrio vulgaris (strain DP4)</name>
    <name type="common">Desulfovibrio vulgaris</name>
    <dbReference type="NCBI Taxonomy" id="391774"/>
    <lineage>
        <taxon>Bacteria</taxon>
        <taxon>Pseudomonadati</taxon>
        <taxon>Thermodesulfobacteriota</taxon>
        <taxon>Desulfovibrionia</taxon>
        <taxon>Desulfovibrionales</taxon>
        <taxon>Desulfovibrionaceae</taxon>
        <taxon>Nitratidesulfovibrio</taxon>
    </lineage>
</organism>
<comment type="function">
    <text evidence="1">This protein binds to the 23S rRNA, and is important in its secondary structure. It is located near the subunit interface in the base of the L7/L12 stalk, and near the tRNA binding site of the peptidyltransferase center.</text>
</comment>
<comment type="subunit">
    <text evidence="1">Part of the 50S ribosomal subunit.</text>
</comment>
<comment type="similarity">
    <text evidence="1">Belongs to the universal ribosomal protein uL6 family.</text>
</comment>
<feature type="chain" id="PRO_1000055225" description="Large ribosomal subunit protein uL6">
    <location>
        <begin position="1"/>
        <end position="179"/>
    </location>
</feature>
<feature type="region of interest" description="Disordered" evidence="2">
    <location>
        <begin position="151"/>
        <end position="179"/>
    </location>
</feature>
<feature type="compositionally biased region" description="Basic and acidic residues" evidence="2">
    <location>
        <begin position="152"/>
        <end position="169"/>
    </location>
</feature>
<feature type="compositionally biased region" description="Basic residues" evidence="2">
    <location>
        <begin position="170"/>
        <end position="179"/>
    </location>
</feature>